<proteinExistence type="inferred from homology"/>
<dbReference type="EC" id="3.4.21.88" evidence="1"/>
<dbReference type="EMBL" id="AM260479">
    <property type="protein sequence ID" value="CAJ93378.1"/>
    <property type="molecule type" value="Genomic_DNA"/>
</dbReference>
<dbReference type="RefSeq" id="WP_011615588.1">
    <property type="nucleotide sequence ID" value="NC_008313.1"/>
</dbReference>
<dbReference type="SMR" id="Q0K9E3"/>
<dbReference type="STRING" id="381666.H16_A2281"/>
<dbReference type="MEROPS" id="S24.001"/>
<dbReference type="KEGG" id="reh:H16_A2281"/>
<dbReference type="PATRIC" id="fig|381666.6.peg.2685"/>
<dbReference type="eggNOG" id="COG1974">
    <property type="taxonomic scope" value="Bacteria"/>
</dbReference>
<dbReference type="HOGENOM" id="CLU_066192_45_3_4"/>
<dbReference type="OrthoDB" id="9802364at2"/>
<dbReference type="Proteomes" id="UP000008210">
    <property type="component" value="Chromosome 1"/>
</dbReference>
<dbReference type="GO" id="GO:0003677">
    <property type="term" value="F:DNA binding"/>
    <property type="evidence" value="ECO:0007669"/>
    <property type="project" value="UniProtKB-UniRule"/>
</dbReference>
<dbReference type="GO" id="GO:0004252">
    <property type="term" value="F:serine-type endopeptidase activity"/>
    <property type="evidence" value="ECO:0007669"/>
    <property type="project" value="UniProtKB-UniRule"/>
</dbReference>
<dbReference type="GO" id="GO:0006281">
    <property type="term" value="P:DNA repair"/>
    <property type="evidence" value="ECO:0007669"/>
    <property type="project" value="UniProtKB-UniRule"/>
</dbReference>
<dbReference type="GO" id="GO:0006260">
    <property type="term" value="P:DNA replication"/>
    <property type="evidence" value="ECO:0007669"/>
    <property type="project" value="UniProtKB-UniRule"/>
</dbReference>
<dbReference type="GO" id="GO:0045892">
    <property type="term" value="P:negative regulation of DNA-templated transcription"/>
    <property type="evidence" value="ECO:0007669"/>
    <property type="project" value="UniProtKB-UniRule"/>
</dbReference>
<dbReference type="GO" id="GO:0006508">
    <property type="term" value="P:proteolysis"/>
    <property type="evidence" value="ECO:0007669"/>
    <property type="project" value="InterPro"/>
</dbReference>
<dbReference type="GO" id="GO:0009432">
    <property type="term" value="P:SOS response"/>
    <property type="evidence" value="ECO:0007669"/>
    <property type="project" value="UniProtKB-UniRule"/>
</dbReference>
<dbReference type="CDD" id="cd06529">
    <property type="entry name" value="S24_LexA-like"/>
    <property type="match status" value="1"/>
</dbReference>
<dbReference type="FunFam" id="1.10.10.10:FF:000009">
    <property type="entry name" value="LexA repressor"/>
    <property type="match status" value="1"/>
</dbReference>
<dbReference type="FunFam" id="2.10.109.10:FF:000001">
    <property type="entry name" value="LexA repressor"/>
    <property type="match status" value="1"/>
</dbReference>
<dbReference type="Gene3D" id="2.10.109.10">
    <property type="entry name" value="Umud Fragment, subunit A"/>
    <property type="match status" value="1"/>
</dbReference>
<dbReference type="Gene3D" id="1.10.10.10">
    <property type="entry name" value="Winged helix-like DNA-binding domain superfamily/Winged helix DNA-binding domain"/>
    <property type="match status" value="1"/>
</dbReference>
<dbReference type="HAMAP" id="MF_00015">
    <property type="entry name" value="LexA"/>
    <property type="match status" value="1"/>
</dbReference>
<dbReference type="InterPro" id="IPR006200">
    <property type="entry name" value="LexA"/>
</dbReference>
<dbReference type="InterPro" id="IPR039418">
    <property type="entry name" value="LexA-like"/>
</dbReference>
<dbReference type="InterPro" id="IPR036286">
    <property type="entry name" value="LexA/Signal_pep-like_sf"/>
</dbReference>
<dbReference type="InterPro" id="IPR006199">
    <property type="entry name" value="LexA_DNA-bd_dom"/>
</dbReference>
<dbReference type="InterPro" id="IPR050077">
    <property type="entry name" value="LexA_repressor"/>
</dbReference>
<dbReference type="InterPro" id="IPR006197">
    <property type="entry name" value="Peptidase_S24_LexA"/>
</dbReference>
<dbReference type="InterPro" id="IPR015927">
    <property type="entry name" value="Peptidase_S24_S26A/B/C"/>
</dbReference>
<dbReference type="InterPro" id="IPR036388">
    <property type="entry name" value="WH-like_DNA-bd_sf"/>
</dbReference>
<dbReference type="InterPro" id="IPR036390">
    <property type="entry name" value="WH_DNA-bd_sf"/>
</dbReference>
<dbReference type="NCBIfam" id="TIGR00498">
    <property type="entry name" value="lexA"/>
    <property type="match status" value="1"/>
</dbReference>
<dbReference type="PANTHER" id="PTHR33516">
    <property type="entry name" value="LEXA REPRESSOR"/>
    <property type="match status" value="1"/>
</dbReference>
<dbReference type="PANTHER" id="PTHR33516:SF2">
    <property type="entry name" value="LEXA REPRESSOR-RELATED"/>
    <property type="match status" value="1"/>
</dbReference>
<dbReference type="Pfam" id="PF01726">
    <property type="entry name" value="LexA_DNA_bind"/>
    <property type="match status" value="1"/>
</dbReference>
<dbReference type="Pfam" id="PF00717">
    <property type="entry name" value="Peptidase_S24"/>
    <property type="match status" value="1"/>
</dbReference>
<dbReference type="PRINTS" id="PR00726">
    <property type="entry name" value="LEXASERPTASE"/>
</dbReference>
<dbReference type="SUPFAM" id="SSF51306">
    <property type="entry name" value="LexA/Signal peptidase"/>
    <property type="match status" value="1"/>
</dbReference>
<dbReference type="SUPFAM" id="SSF46785">
    <property type="entry name" value="Winged helix' DNA-binding domain"/>
    <property type="match status" value="1"/>
</dbReference>
<accession>Q0K9E3</accession>
<comment type="function">
    <text evidence="1">Represses a number of genes involved in the response to DNA damage (SOS response), including recA and lexA. In the presence of single-stranded DNA, RecA interacts with LexA causing an autocatalytic cleavage which disrupts the DNA-binding part of LexA, leading to derepression of the SOS regulon and eventually DNA repair.</text>
</comment>
<comment type="catalytic activity">
    <reaction evidence="1">
        <text>Hydrolysis of Ala-|-Gly bond in repressor LexA.</text>
        <dbReference type="EC" id="3.4.21.88"/>
    </reaction>
</comment>
<comment type="subunit">
    <text evidence="1">Homodimer.</text>
</comment>
<comment type="similarity">
    <text evidence="1">Belongs to the peptidase S24 family.</text>
</comment>
<protein>
    <recommendedName>
        <fullName evidence="1">LexA repressor</fullName>
        <ecNumber evidence="1">3.4.21.88</ecNumber>
    </recommendedName>
</protein>
<name>LEXA_CUPNH</name>
<keyword id="KW-0068">Autocatalytic cleavage</keyword>
<keyword id="KW-0227">DNA damage</keyword>
<keyword id="KW-0234">DNA repair</keyword>
<keyword id="KW-0235">DNA replication</keyword>
<keyword id="KW-0238">DNA-binding</keyword>
<keyword id="KW-0378">Hydrolase</keyword>
<keyword id="KW-1185">Reference proteome</keyword>
<keyword id="KW-0678">Repressor</keyword>
<keyword id="KW-0742">SOS response</keyword>
<keyword id="KW-0804">Transcription</keyword>
<keyword id="KW-0805">Transcription regulation</keyword>
<gene>
    <name evidence="1" type="primary">lexA</name>
    <name type="ordered locus">H16_A2281</name>
</gene>
<evidence type="ECO:0000255" key="1">
    <source>
        <dbReference type="HAMAP-Rule" id="MF_00015"/>
    </source>
</evidence>
<sequence>MATLTPRQQQIFDLIRNTIRRTGFPPTRAEIAAEFGFSSPNAAEEHLRALARKGVIELTPGASRGIRLKVAHSDSEMPDQFSLPMAGVMQLTLPLVGRVAAGSPILAAEHIDRQYQVDASVFDERPDYLLRVRGLSMRDAGILDGDLLAVRRASEAANGKIVVARLGDDVTVKRLQRRGGHIELIAENPDFTNIIVEPGEEFSLEGIAVGLIRSSGF</sequence>
<feature type="chain" id="PRO_1000001321" description="LexA repressor">
    <location>
        <begin position="1"/>
        <end position="217"/>
    </location>
</feature>
<feature type="DNA-binding region" description="H-T-H motif" evidence="1">
    <location>
        <begin position="28"/>
        <end position="48"/>
    </location>
</feature>
<feature type="active site" description="For autocatalytic cleavage activity" evidence="1">
    <location>
        <position position="136"/>
    </location>
</feature>
<feature type="active site" description="For autocatalytic cleavage activity" evidence="1">
    <location>
        <position position="173"/>
    </location>
</feature>
<feature type="site" description="Cleavage; by autolysis" evidence="1">
    <location>
        <begin position="101"/>
        <end position="102"/>
    </location>
</feature>
<reference key="1">
    <citation type="journal article" date="2006" name="Nat. Biotechnol.">
        <title>Genome sequence of the bioplastic-producing 'Knallgas' bacterium Ralstonia eutropha H16.</title>
        <authorList>
            <person name="Pohlmann A."/>
            <person name="Fricke W.F."/>
            <person name="Reinecke F."/>
            <person name="Kusian B."/>
            <person name="Liesegang H."/>
            <person name="Cramm R."/>
            <person name="Eitinger T."/>
            <person name="Ewering C."/>
            <person name="Poetter M."/>
            <person name="Schwartz E."/>
            <person name="Strittmatter A."/>
            <person name="Voss I."/>
            <person name="Gottschalk G."/>
            <person name="Steinbuechel A."/>
            <person name="Friedrich B."/>
            <person name="Bowien B."/>
        </authorList>
    </citation>
    <scope>NUCLEOTIDE SEQUENCE [LARGE SCALE GENOMIC DNA]</scope>
    <source>
        <strain>ATCC 17699 / DSM 428 / KCTC 22496 / NCIMB 10442 / H16 / Stanier 337</strain>
    </source>
</reference>
<organism>
    <name type="scientific">Cupriavidus necator (strain ATCC 17699 / DSM 428 / KCTC 22496 / NCIMB 10442 / H16 / Stanier 337)</name>
    <name type="common">Ralstonia eutropha</name>
    <dbReference type="NCBI Taxonomy" id="381666"/>
    <lineage>
        <taxon>Bacteria</taxon>
        <taxon>Pseudomonadati</taxon>
        <taxon>Pseudomonadota</taxon>
        <taxon>Betaproteobacteria</taxon>
        <taxon>Burkholderiales</taxon>
        <taxon>Burkholderiaceae</taxon>
        <taxon>Cupriavidus</taxon>
    </lineage>
</organism>